<dbReference type="EMBL" id="AAFI02000013">
    <property type="protein sequence ID" value="EAL69729.1"/>
    <property type="molecule type" value="Genomic_DNA"/>
</dbReference>
<dbReference type="RefSeq" id="XP_643654.1">
    <property type="nucleotide sequence ID" value="XM_638562.1"/>
</dbReference>
<dbReference type="SMR" id="Q553R6"/>
<dbReference type="STRING" id="44689.Q553R6"/>
<dbReference type="PaxDb" id="44689-DDB0230046"/>
<dbReference type="EnsemblProtists" id="EAL69729">
    <property type="protein sequence ID" value="EAL69729"/>
    <property type="gene ID" value="DDB_G0275327"/>
</dbReference>
<dbReference type="GeneID" id="8619920"/>
<dbReference type="KEGG" id="ddi:DDB_G0275327"/>
<dbReference type="dictyBase" id="DDB_G0275327">
    <property type="gene designation" value="rabX"/>
</dbReference>
<dbReference type="VEuPathDB" id="AmoebaDB:DDB_G0275327"/>
<dbReference type="eggNOG" id="KOG0084">
    <property type="taxonomic scope" value="Eukaryota"/>
</dbReference>
<dbReference type="HOGENOM" id="CLU_617411_0_0_1"/>
<dbReference type="InParanoid" id="Q553R6"/>
<dbReference type="OMA" id="YDINDHI"/>
<dbReference type="Reactome" id="R-DDI-210500">
    <property type="pathway name" value="Glutamate Neurotransmitter Release Cycle"/>
</dbReference>
<dbReference type="Reactome" id="R-DDI-6798695">
    <property type="pathway name" value="Neutrophil degranulation"/>
</dbReference>
<dbReference type="Reactome" id="R-DDI-8873719">
    <property type="pathway name" value="RAB geranylgeranylation"/>
</dbReference>
<dbReference type="Reactome" id="R-DDI-8876198">
    <property type="pathway name" value="RAB GEFs exchange GTP for GDP on RABs"/>
</dbReference>
<dbReference type="PRO" id="PR:Q553R6"/>
<dbReference type="Proteomes" id="UP000002195">
    <property type="component" value="Chromosome 2"/>
</dbReference>
<dbReference type="GO" id="GO:0016020">
    <property type="term" value="C:membrane"/>
    <property type="evidence" value="ECO:0000318"/>
    <property type="project" value="GO_Central"/>
</dbReference>
<dbReference type="GO" id="GO:0005886">
    <property type="term" value="C:plasma membrane"/>
    <property type="evidence" value="ECO:0007669"/>
    <property type="project" value="UniProtKB-SubCell"/>
</dbReference>
<dbReference type="GO" id="GO:0005525">
    <property type="term" value="F:GTP binding"/>
    <property type="evidence" value="ECO:0007669"/>
    <property type="project" value="UniProtKB-KW"/>
</dbReference>
<dbReference type="GO" id="GO:0003924">
    <property type="term" value="F:GTPase activity"/>
    <property type="evidence" value="ECO:0000318"/>
    <property type="project" value="GO_Central"/>
</dbReference>
<dbReference type="GO" id="GO:0006887">
    <property type="term" value="P:exocytosis"/>
    <property type="evidence" value="ECO:0000318"/>
    <property type="project" value="GO_Central"/>
</dbReference>
<dbReference type="Gene3D" id="3.40.50.300">
    <property type="entry name" value="P-loop containing nucleotide triphosphate hydrolases"/>
    <property type="match status" value="1"/>
</dbReference>
<dbReference type="InterPro" id="IPR027417">
    <property type="entry name" value="P-loop_NTPase"/>
</dbReference>
<dbReference type="InterPro" id="IPR001806">
    <property type="entry name" value="Small_GTPase"/>
</dbReference>
<dbReference type="InterPro" id="IPR050305">
    <property type="entry name" value="Small_GTPase_Rab"/>
</dbReference>
<dbReference type="PANTHER" id="PTHR47980">
    <property type="entry name" value="LD44762P"/>
    <property type="match status" value="1"/>
</dbReference>
<dbReference type="Pfam" id="PF00071">
    <property type="entry name" value="Ras"/>
    <property type="match status" value="1"/>
</dbReference>
<dbReference type="SMART" id="SM00175">
    <property type="entry name" value="RAB"/>
    <property type="match status" value="1"/>
</dbReference>
<dbReference type="SUPFAM" id="SSF52540">
    <property type="entry name" value="P-loop containing nucleoside triphosphate hydrolases"/>
    <property type="match status" value="1"/>
</dbReference>
<dbReference type="PROSITE" id="PS51419">
    <property type="entry name" value="RAB"/>
    <property type="match status" value="1"/>
</dbReference>
<organism>
    <name type="scientific">Dictyostelium discoideum</name>
    <name type="common">Social amoeba</name>
    <dbReference type="NCBI Taxonomy" id="44689"/>
    <lineage>
        <taxon>Eukaryota</taxon>
        <taxon>Amoebozoa</taxon>
        <taxon>Evosea</taxon>
        <taxon>Eumycetozoa</taxon>
        <taxon>Dictyostelia</taxon>
        <taxon>Dictyosteliales</taxon>
        <taxon>Dictyosteliaceae</taxon>
        <taxon>Dictyostelium</taxon>
    </lineage>
</organism>
<feature type="chain" id="PRO_0000332773" description="Ras-related protein RabX">
    <location>
        <begin position="1"/>
        <end position="441"/>
    </location>
</feature>
<feature type="propeptide" id="PRO_0000370838" description="Removed in mature form" evidence="2">
    <location>
        <begin position="442"/>
        <end position="444"/>
    </location>
</feature>
<feature type="region of interest" description="Disordered" evidence="3">
    <location>
        <begin position="91"/>
        <end position="136"/>
    </location>
</feature>
<feature type="region of interest" description="Disordered" evidence="3">
    <location>
        <begin position="213"/>
        <end position="232"/>
    </location>
</feature>
<feature type="region of interest" description="Disordered" evidence="3">
    <location>
        <begin position="298"/>
        <end position="401"/>
    </location>
</feature>
<feature type="short sequence motif" description="Effector region" evidence="1">
    <location>
        <begin position="51"/>
        <end position="58"/>
    </location>
</feature>
<feature type="compositionally biased region" description="Low complexity" evidence="3">
    <location>
        <begin position="95"/>
        <end position="135"/>
    </location>
</feature>
<feature type="compositionally biased region" description="Low complexity" evidence="3">
    <location>
        <begin position="217"/>
        <end position="232"/>
    </location>
</feature>
<feature type="compositionally biased region" description="Low complexity" evidence="3">
    <location>
        <begin position="303"/>
        <end position="399"/>
    </location>
</feature>
<feature type="binding site" evidence="1">
    <location>
        <begin position="29"/>
        <end position="36"/>
    </location>
    <ligand>
        <name>GTP</name>
        <dbReference type="ChEBI" id="CHEBI:37565"/>
    </ligand>
</feature>
<feature type="binding site" evidence="1">
    <location>
        <begin position="73"/>
        <end position="77"/>
    </location>
    <ligand>
        <name>GTP</name>
        <dbReference type="ChEBI" id="CHEBI:37565"/>
    </ligand>
</feature>
<feature type="binding site" evidence="1">
    <location>
        <begin position="207"/>
        <end position="210"/>
    </location>
    <ligand>
        <name>GTP</name>
        <dbReference type="ChEBI" id="CHEBI:37565"/>
    </ligand>
</feature>
<feature type="modified residue" description="Cysteine methyl ester" evidence="2">
    <location>
        <position position="441"/>
    </location>
</feature>
<feature type="lipid moiety-binding region" description="S-palmitoyl cysteine" evidence="2">
    <location>
        <position position="439"/>
    </location>
</feature>
<feature type="lipid moiety-binding region" description="S-geranylgeranyl cysteine" evidence="1">
    <location>
        <position position="441"/>
    </location>
</feature>
<name>RABX_DICDI</name>
<keyword id="KW-1003">Cell membrane</keyword>
<keyword id="KW-0342">GTP-binding</keyword>
<keyword id="KW-0449">Lipoprotein</keyword>
<keyword id="KW-0472">Membrane</keyword>
<keyword id="KW-0488">Methylation</keyword>
<keyword id="KW-0547">Nucleotide-binding</keyword>
<keyword id="KW-0564">Palmitate</keyword>
<keyword id="KW-0636">Prenylation</keyword>
<keyword id="KW-1185">Reference proteome</keyword>
<reference key="1">
    <citation type="journal article" date="2002" name="Nature">
        <title>Sequence and analysis of chromosome 2 of Dictyostelium discoideum.</title>
        <authorList>
            <person name="Gloeckner G."/>
            <person name="Eichinger L."/>
            <person name="Szafranski K."/>
            <person name="Pachebat J.A."/>
            <person name="Bankier A.T."/>
            <person name="Dear P.H."/>
            <person name="Lehmann R."/>
            <person name="Baumgart C."/>
            <person name="Parra G."/>
            <person name="Abril J.F."/>
            <person name="Guigo R."/>
            <person name="Kumpf K."/>
            <person name="Tunggal B."/>
            <person name="Cox E.C."/>
            <person name="Quail M.A."/>
            <person name="Platzer M."/>
            <person name="Rosenthal A."/>
            <person name="Noegel A.A."/>
        </authorList>
    </citation>
    <scope>NUCLEOTIDE SEQUENCE [LARGE SCALE GENOMIC DNA]</scope>
    <source>
        <strain>AX4</strain>
    </source>
</reference>
<reference key="2">
    <citation type="journal article" date="2005" name="Nature">
        <title>The genome of the social amoeba Dictyostelium discoideum.</title>
        <authorList>
            <person name="Eichinger L."/>
            <person name="Pachebat J.A."/>
            <person name="Gloeckner G."/>
            <person name="Rajandream M.A."/>
            <person name="Sucgang R."/>
            <person name="Berriman M."/>
            <person name="Song J."/>
            <person name="Olsen R."/>
            <person name="Szafranski K."/>
            <person name="Xu Q."/>
            <person name="Tunggal B."/>
            <person name="Kummerfeld S."/>
            <person name="Madera M."/>
            <person name="Konfortov B.A."/>
            <person name="Rivero F."/>
            <person name="Bankier A.T."/>
            <person name="Lehmann R."/>
            <person name="Hamlin N."/>
            <person name="Davies R."/>
            <person name="Gaudet P."/>
            <person name="Fey P."/>
            <person name="Pilcher K."/>
            <person name="Chen G."/>
            <person name="Saunders D."/>
            <person name="Sodergren E.J."/>
            <person name="Davis P."/>
            <person name="Kerhornou A."/>
            <person name="Nie X."/>
            <person name="Hall N."/>
            <person name="Anjard C."/>
            <person name="Hemphill L."/>
            <person name="Bason N."/>
            <person name="Farbrother P."/>
            <person name="Desany B."/>
            <person name="Just E."/>
            <person name="Morio T."/>
            <person name="Rost R."/>
            <person name="Churcher C.M."/>
            <person name="Cooper J."/>
            <person name="Haydock S."/>
            <person name="van Driessche N."/>
            <person name="Cronin A."/>
            <person name="Goodhead I."/>
            <person name="Muzny D.M."/>
            <person name="Mourier T."/>
            <person name="Pain A."/>
            <person name="Lu M."/>
            <person name="Harper D."/>
            <person name="Lindsay R."/>
            <person name="Hauser H."/>
            <person name="James K.D."/>
            <person name="Quiles M."/>
            <person name="Madan Babu M."/>
            <person name="Saito T."/>
            <person name="Buchrieser C."/>
            <person name="Wardroper A."/>
            <person name="Felder M."/>
            <person name="Thangavelu M."/>
            <person name="Johnson D."/>
            <person name="Knights A."/>
            <person name="Loulseged H."/>
            <person name="Mungall K.L."/>
            <person name="Oliver K."/>
            <person name="Price C."/>
            <person name="Quail M.A."/>
            <person name="Urushihara H."/>
            <person name="Hernandez J."/>
            <person name="Rabbinowitsch E."/>
            <person name="Steffen D."/>
            <person name="Sanders M."/>
            <person name="Ma J."/>
            <person name="Kohara Y."/>
            <person name="Sharp S."/>
            <person name="Simmonds M.N."/>
            <person name="Spiegler S."/>
            <person name="Tivey A."/>
            <person name="Sugano S."/>
            <person name="White B."/>
            <person name="Walker D."/>
            <person name="Woodward J.R."/>
            <person name="Winckler T."/>
            <person name="Tanaka Y."/>
            <person name="Shaulsky G."/>
            <person name="Schleicher M."/>
            <person name="Weinstock G.M."/>
            <person name="Rosenthal A."/>
            <person name="Cox E.C."/>
            <person name="Chisholm R.L."/>
            <person name="Gibbs R.A."/>
            <person name="Loomis W.F."/>
            <person name="Platzer M."/>
            <person name="Kay R.R."/>
            <person name="Williams J.G."/>
            <person name="Dear P.H."/>
            <person name="Noegel A.A."/>
            <person name="Barrell B.G."/>
            <person name="Kuspa A."/>
        </authorList>
    </citation>
    <scope>NUCLEOTIDE SEQUENCE [LARGE SCALE GENOMIC DNA]</scope>
    <source>
        <strain>AX4</strain>
    </source>
</reference>
<evidence type="ECO:0000250" key="1"/>
<evidence type="ECO:0000255" key="2"/>
<evidence type="ECO:0000256" key="3">
    <source>
        <dbReference type="SAM" id="MobiDB-lite"/>
    </source>
</evidence>
<evidence type="ECO:0000305" key="4"/>
<gene>
    <name type="primary">rabX</name>
    <name type="ORF">DDB_G0275327</name>
</gene>
<proteinExistence type="inferred from homology"/>
<protein>
    <recommendedName>
        <fullName>Ras-related protein RabX</fullName>
    </recommendedName>
</protein>
<comment type="subcellular location">
    <subcellularLocation>
        <location evidence="4">Cell membrane</location>
        <topology evidence="4">Lipid-anchor</topology>
        <orientation evidence="4">Cytoplasmic side</orientation>
    </subcellularLocation>
</comment>
<comment type="similarity">
    <text evidence="4">Belongs to the small GTPase superfamily. Rab family.</text>
</comment>
<accession>Q553R6</accession>
<sequence>MSKTNQNLTIDKVIDNNNNIYLLKLLMIGGDVCSKNGISMVEKFLKHDKNLIQVFDDYDSTDEYINFKMKLNEFSSIDTSNSINNGIIYSENNKNKNNNNNYNYNNNNYNNNNNNNNNNNNNNNNNNNNNNNNNNSNFKIQIQIKDLSDCYCDLKIQTIPSCFYRGIHGFIIVYDINDHIAYNNIPKWIEEINSFSMKNSKIIVVCNDSNSKTPNFSDSSSSSSSSSSSNIIPLNKNTKNKVVGGVGVDPILANKLFQSLSIPHFIVSVDTNENIKMAFNSLKTLIFENNPLFQFFKLQGDDNNNNNNNNNNNNNNNNNNNNNNNNNNNNLNYLNNLNNLNNLNNENNINNNSLNNNNNNNNNNNNNNNNNNNNNNNNNNNNNNNNNNNNNNNNNTYNNDLKTNKKSLEIKKHNSNIEKKEVKQNIKDKKNKNKNKNACTCNLM</sequence>